<proteinExistence type="uncertain"/>
<organism>
    <name type="scientific">Emericella nidulans (strain FGSC A4 / ATCC 38163 / CBS 112.46 / NRRL 194 / M139)</name>
    <name type="common">Aspergillus nidulans</name>
    <dbReference type="NCBI Taxonomy" id="227321"/>
    <lineage>
        <taxon>Eukaryota</taxon>
        <taxon>Fungi</taxon>
        <taxon>Dikarya</taxon>
        <taxon>Ascomycota</taxon>
        <taxon>Pezizomycotina</taxon>
        <taxon>Eurotiomycetes</taxon>
        <taxon>Eurotiomycetidae</taxon>
        <taxon>Eurotiales</taxon>
        <taxon>Aspergillaceae</taxon>
        <taxon>Aspergillus</taxon>
        <taxon>Aspergillus subgen. Nidulantes</taxon>
    </lineage>
</organism>
<dbReference type="EC" id="3.2.1.22"/>
<dbReference type="EMBL" id="AACD01000048">
    <property type="status" value="NOT_ANNOTATED_CDS"/>
    <property type="molecule type" value="Genomic_DNA"/>
</dbReference>
<dbReference type="EMBL" id="BN001306">
    <property type="protein sequence ID" value="CBF84131.1"/>
    <property type="status" value="ALT_SEQ"/>
    <property type="molecule type" value="Genomic_DNA"/>
</dbReference>
<dbReference type="SMR" id="C8VJZ7"/>
<dbReference type="GlyCosmos" id="C8VJZ7">
    <property type="glycosylation" value="3 sites, No reported glycans"/>
</dbReference>
<dbReference type="HOGENOM" id="CLU_2904182_0_0_1"/>
<dbReference type="InParanoid" id="C8VJZ7"/>
<dbReference type="Proteomes" id="UP000000560">
    <property type="component" value="Chromosome VI"/>
</dbReference>
<dbReference type="GO" id="GO:0005576">
    <property type="term" value="C:extracellular region"/>
    <property type="evidence" value="ECO:0007669"/>
    <property type="project" value="UniProtKB-SubCell"/>
</dbReference>
<dbReference type="GO" id="GO:0004557">
    <property type="term" value="F:alpha-galactosidase activity"/>
    <property type="evidence" value="ECO:0007669"/>
    <property type="project" value="UniProtKB-EC"/>
</dbReference>
<dbReference type="GO" id="GO:0005975">
    <property type="term" value="P:carbohydrate metabolic process"/>
    <property type="evidence" value="ECO:0007669"/>
    <property type="project" value="InterPro"/>
</dbReference>
<dbReference type="CDD" id="cd14792">
    <property type="entry name" value="GH27"/>
    <property type="match status" value="1"/>
</dbReference>
<dbReference type="Gene3D" id="3.20.20.70">
    <property type="entry name" value="Aldolase class I"/>
    <property type="match status" value="1"/>
</dbReference>
<dbReference type="InterPro" id="IPR013785">
    <property type="entry name" value="Aldolase_TIM"/>
</dbReference>
<dbReference type="InterPro" id="IPR002241">
    <property type="entry name" value="Glyco_hydro_27"/>
</dbReference>
<dbReference type="InterPro" id="IPR017853">
    <property type="entry name" value="Glycoside_hydrolase_SF"/>
</dbReference>
<dbReference type="PANTHER" id="PTHR11452:SF33">
    <property type="entry name" value="ALPHA-GALACTOSIDASE 2"/>
    <property type="match status" value="1"/>
</dbReference>
<dbReference type="PANTHER" id="PTHR11452">
    <property type="entry name" value="ALPHA-GALACTOSIDASE/ALPHA-N-ACETYLGALACTOSAMINIDASE"/>
    <property type="match status" value="1"/>
</dbReference>
<dbReference type="Pfam" id="PF16499">
    <property type="entry name" value="Melibiase_2"/>
    <property type="match status" value="1"/>
</dbReference>
<dbReference type="SUPFAM" id="SSF51445">
    <property type="entry name" value="(Trans)glycosidases"/>
    <property type="match status" value="1"/>
</dbReference>
<gene>
    <name type="primary">agl8</name>
    <name type="ORF">AN11361</name>
</gene>
<protein>
    <recommendedName>
        <fullName>Putative alpha-galactosidase 8</fullName>
        <ecNumber>3.2.1.22</ecNumber>
    </recommendedName>
    <alternativeName>
        <fullName>Alpha-D-galactoside galactohydrolase 8</fullName>
    </alternativeName>
    <alternativeName>
        <fullName>Melibiase 8</fullName>
    </alternativeName>
</protein>
<evidence type="ECO:0000250" key="1"/>
<evidence type="ECO:0000255" key="2"/>
<evidence type="ECO:0000305" key="3"/>
<evidence type="ECO:0000305" key="4">
    <source>
    </source>
</evidence>
<comment type="function">
    <text evidence="1">Putative alpha-galactosidase involved in the degradation of simple oligosaccharides like melibiose, raffinose and stachyose, and of polymeric galacto(gluco)mannans.</text>
</comment>
<comment type="catalytic activity">
    <reaction>
        <text>Hydrolysis of terminal, non-reducing alpha-D-galactose residues in alpha-D-galactosides, including galactose oligosaccharides, galactomannans and galactolipids.</text>
        <dbReference type="EC" id="3.2.1.22"/>
    </reaction>
</comment>
<comment type="subcellular location">
    <subcellularLocation>
        <location evidence="3">Secreted</location>
    </subcellularLocation>
</comment>
<comment type="similarity">
    <text evidence="3">Belongs to the glycosyl hydrolase 27 family.</text>
</comment>
<comment type="caution">
    <text evidence="4">Could be the product of a pseudogene. It is unsure wether the two stop codons at positions 140 and 230 are real or are due to sequencing errors (PubMed:15285616).</text>
</comment>
<comment type="sequence caution" evidence="3">
    <conflict type="erroneous termination">
        <sequence resource="EMBL-CDS" id="CBF84131"/>
    </conflict>
    <text>Truncated C-terminus.</text>
</comment>
<comment type="sequence caution" evidence="3">
    <conflict type="erroneous translation">
        <sequence resource="EMBL-CDS" id="CBF84131"/>
    </conflict>
    <text>Wrong choice of frame.</text>
</comment>
<name>AGAL8_EMENI</name>
<sequence length="499" mass="56049">MELEKFKPWRDSHSEHIPVPLTSRQNIIIILLILFSHYHHWYWRCRRPTDRWSLLAVCHKHHQRAPNSLPTSKSLHSFLHSARGWNSWGIQATPNTIPSYPKEELGRVLNQKFIISQCTMLTDPATQDAGYDLCSLDGGWYSSITDKFGCITYNASLFDISALSRYLHGKGLRMGLYSQPGTPCKARHGTNVTVGSAFIDHVDKNNNCYFDYENPNTQLYRELITLWVSWGVDMIKLDYVTPGSTFQDTCMPGNLNASAIAYHCAIEKSGRKFQLDVSSDVCRSQPYWGTWNSNADSIRVDTDINPYDSDDFFFFYMQHCTVEDYRQFVNLQVVDAQNDKPVTLRGNLDNLFVGNPAKVKGVTDKQRNTLMRIWIGASSNLFLGSDMRILDDLGRWLITSPSSIAAADFCAMYPMQPRNPGTGSNQAVQLQACITGPSEHGEAYVLLTNLGPNLGDGGYVTVGGGEQKMSVTLADMGPSRSSANRLDLSPRPIHVLILL</sequence>
<reference key="1">
    <citation type="journal article" date="2005" name="Nature">
        <title>Sequencing of Aspergillus nidulans and comparative analysis with A. fumigatus and A. oryzae.</title>
        <authorList>
            <person name="Galagan J.E."/>
            <person name="Calvo S.E."/>
            <person name="Cuomo C."/>
            <person name="Ma L.-J."/>
            <person name="Wortman J.R."/>
            <person name="Batzoglou S."/>
            <person name="Lee S.-I."/>
            <person name="Bastuerkmen M."/>
            <person name="Spevak C.C."/>
            <person name="Clutterbuck J."/>
            <person name="Kapitonov V."/>
            <person name="Jurka J."/>
            <person name="Scazzocchio C."/>
            <person name="Farman M.L."/>
            <person name="Butler J."/>
            <person name="Purcell S."/>
            <person name="Harris S."/>
            <person name="Braus G.H."/>
            <person name="Draht O."/>
            <person name="Busch S."/>
            <person name="D'Enfert C."/>
            <person name="Bouchier C."/>
            <person name="Goldman G.H."/>
            <person name="Bell-Pedersen D."/>
            <person name="Griffiths-Jones S."/>
            <person name="Doonan J.H."/>
            <person name="Yu J."/>
            <person name="Vienken K."/>
            <person name="Pain A."/>
            <person name="Freitag M."/>
            <person name="Selker E.U."/>
            <person name="Archer D.B."/>
            <person name="Penalva M.A."/>
            <person name="Oakley B.R."/>
            <person name="Momany M."/>
            <person name="Tanaka T."/>
            <person name="Kumagai T."/>
            <person name="Asai K."/>
            <person name="Machida M."/>
            <person name="Nierman W.C."/>
            <person name="Denning D.W."/>
            <person name="Caddick M.X."/>
            <person name="Hynes M."/>
            <person name="Paoletti M."/>
            <person name="Fischer R."/>
            <person name="Miller B.L."/>
            <person name="Dyer P.S."/>
            <person name="Sachs M.S."/>
            <person name="Osmani S.A."/>
            <person name="Birren B.W."/>
        </authorList>
    </citation>
    <scope>NUCLEOTIDE SEQUENCE [LARGE SCALE GENOMIC DNA]</scope>
    <source>
        <strain>FGSC A4 / ATCC 38163 / CBS 112.46 / NRRL 194 / M139</strain>
    </source>
</reference>
<reference key="2">
    <citation type="journal article" date="2009" name="Fungal Genet. Biol.">
        <title>The 2008 update of the Aspergillus nidulans genome annotation: a community effort.</title>
        <authorList>
            <person name="Wortman J.R."/>
            <person name="Gilsenan J.M."/>
            <person name="Joardar V."/>
            <person name="Deegan J."/>
            <person name="Clutterbuck J."/>
            <person name="Andersen M.R."/>
            <person name="Archer D."/>
            <person name="Bencina M."/>
            <person name="Braus G."/>
            <person name="Coutinho P."/>
            <person name="von Dohren H."/>
            <person name="Doonan J."/>
            <person name="Driessen A.J."/>
            <person name="Durek P."/>
            <person name="Espeso E."/>
            <person name="Fekete E."/>
            <person name="Flipphi M."/>
            <person name="Estrada C.G."/>
            <person name="Geysens S."/>
            <person name="Goldman G."/>
            <person name="de Groot P.W."/>
            <person name="Hansen K."/>
            <person name="Harris S.D."/>
            <person name="Heinekamp T."/>
            <person name="Helmstaedt K."/>
            <person name="Henrissat B."/>
            <person name="Hofmann G."/>
            <person name="Homan T."/>
            <person name="Horio T."/>
            <person name="Horiuchi H."/>
            <person name="James S."/>
            <person name="Jones M."/>
            <person name="Karaffa L."/>
            <person name="Karanyi Z."/>
            <person name="Kato M."/>
            <person name="Keller N."/>
            <person name="Kelly D.E."/>
            <person name="Kiel J.A."/>
            <person name="Kim J.M."/>
            <person name="van der Klei I.J."/>
            <person name="Klis F.M."/>
            <person name="Kovalchuk A."/>
            <person name="Krasevec N."/>
            <person name="Kubicek C.P."/>
            <person name="Liu B."/>
            <person name="Maccabe A."/>
            <person name="Meyer V."/>
            <person name="Mirabito P."/>
            <person name="Miskei M."/>
            <person name="Mos M."/>
            <person name="Mullins J."/>
            <person name="Nelson D.R."/>
            <person name="Nielsen J."/>
            <person name="Oakley B.R."/>
            <person name="Osmani S.A."/>
            <person name="Pakula T."/>
            <person name="Paszewski A."/>
            <person name="Paulsen I."/>
            <person name="Pilsyk S."/>
            <person name="Pocsi I."/>
            <person name="Punt P.J."/>
            <person name="Ram A.F."/>
            <person name="Ren Q."/>
            <person name="Robellet X."/>
            <person name="Robson G."/>
            <person name="Seiboth B."/>
            <person name="van Solingen P."/>
            <person name="Specht T."/>
            <person name="Sun J."/>
            <person name="Taheri-Talesh N."/>
            <person name="Takeshita N."/>
            <person name="Ussery D."/>
            <person name="vanKuyk P.A."/>
            <person name="Visser H."/>
            <person name="van de Vondervoort P.J."/>
            <person name="de Vries R.P."/>
            <person name="Walton J."/>
            <person name="Xiang X."/>
            <person name="Xiong Y."/>
            <person name="Zeng A.P."/>
            <person name="Brandt B.W."/>
            <person name="Cornell M.J."/>
            <person name="van den Hondel C.A."/>
            <person name="Visser J."/>
            <person name="Oliver S.G."/>
            <person name="Turner G."/>
        </authorList>
    </citation>
    <scope>GENOME REANNOTATION</scope>
    <source>
        <strain>FGSC A4 / ATCC 38163 / CBS 112.46 / NRRL 194 / M139</strain>
    </source>
</reference>
<reference key="3">
    <citation type="journal article" date="2004" name="Mol. Biol. (Mosk.)">
        <title>Phylogenetic analysis of alpha-galactosidases of the GH27 family.</title>
        <authorList>
            <person name="Naumov D.G."/>
        </authorList>
    </citation>
    <scope>IDENTIFICATION</scope>
</reference>
<accession>C8VJZ7</accession>
<feature type="signal peptide" evidence="2">
    <location>
        <begin position="1"/>
        <end status="unknown"/>
    </location>
</feature>
<feature type="chain" id="PRO_0000392533" description="Putative alpha-galactosidase 8">
    <location>
        <begin status="unknown"/>
        <end position="499"/>
    </location>
</feature>
<feature type="active site" description="Nucleophile" evidence="1">
    <location>
        <position position="238"/>
    </location>
</feature>
<feature type="active site" description="Proton donor" evidence="1">
    <location>
        <position position="303"/>
    </location>
</feature>
<feature type="glycosylation site" description="N-linked (GlcNAc...) asparagine" evidence="2">
    <location>
        <position position="154"/>
    </location>
</feature>
<feature type="glycosylation site" description="N-linked (GlcNAc...) asparagine" evidence="2">
    <location>
        <position position="191"/>
    </location>
</feature>
<feature type="glycosylation site" description="N-linked (GlcNAc...) asparagine" evidence="2">
    <location>
        <position position="256"/>
    </location>
</feature>
<keyword id="KW-0325">Glycoprotein</keyword>
<keyword id="KW-0326">Glycosidase</keyword>
<keyword id="KW-0378">Hydrolase</keyword>
<keyword id="KW-1185">Reference proteome</keyword>
<keyword id="KW-0964">Secreted</keyword>
<keyword id="KW-0732">Signal</keyword>